<dbReference type="EC" id="6.1.1.12" evidence="1"/>
<dbReference type="EMBL" id="CP000468">
    <property type="protein sequence ID" value="ABJ01217.1"/>
    <property type="molecule type" value="Genomic_DNA"/>
</dbReference>
<dbReference type="RefSeq" id="WP_001258675.1">
    <property type="nucleotide sequence ID" value="NZ_CADILS010000028.1"/>
</dbReference>
<dbReference type="SMR" id="A1AC27"/>
<dbReference type="KEGG" id="ecv:APECO1_916"/>
<dbReference type="HOGENOM" id="CLU_014330_3_2_6"/>
<dbReference type="Proteomes" id="UP000008216">
    <property type="component" value="Chromosome"/>
</dbReference>
<dbReference type="GO" id="GO:0005737">
    <property type="term" value="C:cytoplasm"/>
    <property type="evidence" value="ECO:0007669"/>
    <property type="project" value="UniProtKB-SubCell"/>
</dbReference>
<dbReference type="GO" id="GO:0004815">
    <property type="term" value="F:aspartate-tRNA ligase activity"/>
    <property type="evidence" value="ECO:0007669"/>
    <property type="project" value="UniProtKB-UniRule"/>
</dbReference>
<dbReference type="GO" id="GO:0005524">
    <property type="term" value="F:ATP binding"/>
    <property type="evidence" value="ECO:0007669"/>
    <property type="project" value="UniProtKB-UniRule"/>
</dbReference>
<dbReference type="GO" id="GO:0003676">
    <property type="term" value="F:nucleic acid binding"/>
    <property type="evidence" value="ECO:0007669"/>
    <property type="project" value="InterPro"/>
</dbReference>
<dbReference type="GO" id="GO:0006422">
    <property type="term" value="P:aspartyl-tRNA aminoacylation"/>
    <property type="evidence" value="ECO:0007669"/>
    <property type="project" value="UniProtKB-UniRule"/>
</dbReference>
<dbReference type="CDD" id="cd00777">
    <property type="entry name" value="AspRS_core"/>
    <property type="match status" value="1"/>
</dbReference>
<dbReference type="CDD" id="cd04317">
    <property type="entry name" value="EcAspRS_like_N"/>
    <property type="match status" value="1"/>
</dbReference>
<dbReference type="FunFam" id="2.40.50.140:FF:000080">
    <property type="entry name" value="Aspartate--tRNA ligase"/>
    <property type="match status" value="1"/>
</dbReference>
<dbReference type="FunFam" id="3.30.1360.30:FF:000001">
    <property type="entry name" value="Aspartate--tRNA ligase"/>
    <property type="match status" value="1"/>
</dbReference>
<dbReference type="Gene3D" id="3.30.930.10">
    <property type="entry name" value="Bira Bifunctional Protein, Domain 2"/>
    <property type="match status" value="1"/>
</dbReference>
<dbReference type="Gene3D" id="3.30.1360.30">
    <property type="entry name" value="GAD-like domain"/>
    <property type="match status" value="1"/>
</dbReference>
<dbReference type="Gene3D" id="2.40.50.140">
    <property type="entry name" value="Nucleic acid-binding proteins"/>
    <property type="match status" value="1"/>
</dbReference>
<dbReference type="HAMAP" id="MF_00044">
    <property type="entry name" value="Asp_tRNA_synth_type1"/>
    <property type="match status" value="1"/>
</dbReference>
<dbReference type="InterPro" id="IPR004364">
    <property type="entry name" value="Aa-tRNA-synt_II"/>
</dbReference>
<dbReference type="InterPro" id="IPR006195">
    <property type="entry name" value="aa-tRNA-synth_II"/>
</dbReference>
<dbReference type="InterPro" id="IPR045864">
    <property type="entry name" value="aa-tRNA-synth_II/BPL/LPL"/>
</dbReference>
<dbReference type="InterPro" id="IPR004524">
    <property type="entry name" value="Asp-tRNA-ligase_1"/>
</dbReference>
<dbReference type="InterPro" id="IPR047089">
    <property type="entry name" value="Asp-tRNA-ligase_1_N"/>
</dbReference>
<dbReference type="InterPro" id="IPR002312">
    <property type="entry name" value="Asp/Asn-tRNA-synth_IIb"/>
</dbReference>
<dbReference type="InterPro" id="IPR047090">
    <property type="entry name" value="AspRS_core"/>
</dbReference>
<dbReference type="InterPro" id="IPR004115">
    <property type="entry name" value="GAD-like_sf"/>
</dbReference>
<dbReference type="InterPro" id="IPR029351">
    <property type="entry name" value="GAD_dom"/>
</dbReference>
<dbReference type="InterPro" id="IPR012340">
    <property type="entry name" value="NA-bd_OB-fold"/>
</dbReference>
<dbReference type="InterPro" id="IPR004365">
    <property type="entry name" value="NA-bd_OB_tRNA"/>
</dbReference>
<dbReference type="NCBIfam" id="TIGR00459">
    <property type="entry name" value="aspS_bact"/>
    <property type="match status" value="1"/>
</dbReference>
<dbReference type="NCBIfam" id="NF001750">
    <property type="entry name" value="PRK00476.1"/>
    <property type="match status" value="1"/>
</dbReference>
<dbReference type="PANTHER" id="PTHR22594:SF5">
    <property type="entry name" value="ASPARTATE--TRNA LIGASE, MITOCHONDRIAL"/>
    <property type="match status" value="1"/>
</dbReference>
<dbReference type="PANTHER" id="PTHR22594">
    <property type="entry name" value="ASPARTYL/LYSYL-TRNA SYNTHETASE"/>
    <property type="match status" value="1"/>
</dbReference>
<dbReference type="Pfam" id="PF02938">
    <property type="entry name" value="GAD"/>
    <property type="match status" value="1"/>
</dbReference>
<dbReference type="Pfam" id="PF00152">
    <property type="entry name" value="tRNA-synt_2"/>
    <property type="match status" value="1"/>
</dbReference>
<dbReference type="Pfam" id="PF01336">
    <property type="entry name" value="tRNA_anti-codon"/>
    <property type="match status" value="1"/>
</dbReference>
<dbReference type="PRINTS" id="PR01042">
    <property type="entry name" value="TRNASYNTHASP"/>
</dbReference>
<dbReference type="SUPFAM" id="SSF55681">
    <property type="entry name" value="Class II aaRS and biotin synthetases"/>
    <property type="match status" value="1"/>
</dbReference>
<dbReference type="SUPFAM" id="SSF55261">
    <property type="entry name" value="GAD domain-like"/>
    <property type="match status" value="1"/>
</dbReference>
<dbReference type="SUPFAM" id="SSF50249">
    <property type="entry name" value="Nucleic acid-binding proteins"/>
    <property type="match status" value="1"/>
</dbReference>
<dbReference type="PROSITE" id="PS50862">
    <property type="entry name" value="AA_TRNA_LIGASE_II"/>
    <property type="match status" value="1"/>
</dbReference>
<protein>
    <recommendedName>
        <fullName evidence="1">Aspartate--tRNA ligase</fullName>
        <ecNumber evidence="1">6.1.1.12</ecNumber>
    </recommendedName>
    <alternativeName>
        <fullName evidence="1">Aspartyl-tRNA synthetase</fullName>
        <shortName evidence="1">AspRS</shortName>
    </alternativeName>
</protein>
<keyword id="KW-0030">Aminoacyl-tRNA synthetase</keyword>
<keyword id="KW-0067">ATP-binding</keyword>
<keyword id="KW-0963">Cytoplasm</keyword>
<keyword id="KW-0436">Ligase</keyword>
<keyword id="KW-0547">Nucleotide-binding</keyword>
<keyword id="KW-0648">Protein biosynthesis</keyword>
<keyword id="KW-1185">Reference proteome</keyword>
<reference key="1">
    <citation type="journal article" date="2007" name="J. Bacteriol.">
        <title>The genome sequence of avian pathogenic Escherichia coli strain O1:K1:H7 shares strong similarities with human extraintestinal pathogenic E. coli genomes.</title>
        <authorList>
            <person name="Johnson T.J."/>
            <person name="Kariyawasam S."/>
            <person name="Wannemuehler Y."/>
            <person name="Mangiamele P."/>
            <person name="Johnson S.J."/>
            <person name="Doetkott C."/>
            <person name="Skyberg J.A."/>
            <person name="Lynne A.M."/>
            <person name="Johnson J.R."/>
            <person name="Nolan L.K."/>
        </authorList>
    </citation>
    <scope>NUCLEOTIDE SEQUENCE [LARGE SCALE GENOMIC DNA]</scope>
</reference>
<proteinExistence type="inferred from homology"/>
<feature type="chain" id="PRO_1000006670" description="Aspartate--tRNA ligase">
    <location>
        <begin position="1"/>
        <end position="590"/>
    </location>
</feature>
<feature type="region of interest" description="Aspartate" evidence="1">
    <location>
        <begin position="195"/>
        <end position="198"/>
    </location>
</feature>
<feature type="binding site" evidence="1">
    <location>
        <position position="171"/>
    </location>
    <ligand>
        <name>L-aspartate</name>
        <dbReference type="ChEBI" id="CHEBI:29991"/>
    </ligand>
</feature>
<feature type="binding site" evidence="1">
    <location>
        <begin position="217"/>
        <end position="219"/>
    </location>
    <ligand>
        <name>ATP</name>
        <dbReference type="ChEBI" id="CHEBI:30616"/>
    </ligand>
</feature>
<feature type="binding site" evidence="1">
    <location>
        <position position="217"/>
    </location>
    <ligand>
        <name>L-aspartate</name>
        <dbReference type="ChEBI" id="CHEBI:29991"/>
    </ligand>
</feature>
<feature type="binding site" evidence="1">
    <location>
        <position position="226"/>
    </location>
    <ligand>
        <name>ATP</name>
        <dbReference type="ChEBI" id="CHEBI:30616"/>
    </ligand>
</feature>
<feature type="binding site" evidence="1">
    <location>
        <position position="448"/>
    </location>
    <ligand>
        <name>L-aspartate</name>
        <dbReference type="ChEBI" id="CHEBI:29991"/>
    </ligand>
</feature>
<feature type="binding site" evidence="1">
    <location>
        <position position="482"/>
    </location>
    <ligand>
        <name>ATP</name>
        <dbReference type="ChEBI" id="CHEBI:30616"/>
    </ligand>
</feature>
<feature type="binding site" evidence="1">
    <location>
        <position position="489"/>
    </location>
    <ligand>
        <name>L-aspartate</name>
        <dbReference type="ChEBI" id="CHEBI:29991"/>
    </ligand>
</feature>
<feature type="binding site" evidence="1">
    <location>
        <begin position="534"/>
        <end position="537"/>
    </location>
    <ligand>
        <name>ATP</name>
        <dbReference type="ChEBI" id="CHEBI:30616"/>
    </ligand>
</feature>
<sequence>MRTEYCGQLRLSHVGQQVTLCGWVNRRRDLGSLIFIDMRDREGIVQVFFDPDRADALKLASELRNEFCIQVTGTVRARDEKNINRDMATGEIEVLASSLTIINRADVLPLDSNHVNTEEARLKYRYLDLRRPEMAQRLKTRAKITSLVRRFMDDHGFLDIETPMLTKATPEGARDYLVPSRVHKGKFYALPQSPQLFKQLLMMSGFDRYYQIVKCFRDEDLRADRQPEFTQIDVETSFMTAPQVREVMEALVRHLWLEVKGVDLGDFPVMTFAEAERRYGSDKPDLRNPMELTDVADLLKSVEFAVFAGPANDPKGRVAALRVPGGASLTRKQIDEYGNFVKIYGAKGLAYIKVNERAKGLEGINSPVAKFLNAEIIEAILERTGAQDGDMIFFGADNKKIVADAMGALRLKVGKDLGLTDESKWAPLWVIDFPMFEDDGEGGLTAMHHPFTSPKDMTAAELKAAPENAVANAYDMVINGYEVGGGSVRIHNGDMQQTVFGILGINEEEQREKFGFLLDALKYGTPPHAGLAFGLDRLTMLLTGTDNIRDVIAFPKTTAAACLMTEAPSFANPTALAELSIQVVKKAENN</sequence>
<evidence type="ECO:0000255" key="1">
    <source>
        <dbReference type="HAMAP-Rule" id="MF_00044"/>
    </source>
</evidence>
<comment type="function">
    <text evidence="1">Catalyzes the attachment of L-aspartate to tRNA(Asp) in a two-step reaction: L-aspartate is first activated by ATP to form Asp-AMP and then transferred to the acceptor end of tRNA(Asp).</text>
</comment>
<comment type="catalytic activity">
    <reaction evidence="1">
        <text>tRNA(Asp) + L-aspartate + ATP = L-aspartyl-tRNA(Asp) + AMP + diphosphate</text>
        <dbReference type="Rhea" id="RHEA:19649"/>
        <dbReference type="Rhea" id="RHEA-COMP:9660"/>
        <dbReference type="Rhea" id="RHEA-COMP:9678"/>
        <dbReference type="ChEBI" id="CHEBI:29991"/>
        <dbReference type="ChEBI" id="CHEBI:30616"/>
        <dbReference type="ChEBI" id="CHEBI:33019"/>
        <dbReference type="ChEBI" id="CHEBI:78442"/>
        <dbReference type="ChEBI" id="CHEBI:78516"/>
        <dbReference type="ChEBI" id="CHEBI:456215"/>
        <dbReference type="EC" id="6.1.1.12"/>
    </reaction>
</comment>
<comment type="subunit">
    <text evidence="1">Homodimer.</text>
</comment>
<comment type="subcellular location">
    <subcellularLocation>
        <location evidence="1">Cytoplasm</location>
    </subcellularLocation>
</comment>
<comment type="similarity">
    <text evidence="1">Belongs to the class-II aminoacyl-tRNA synthetase family. Type 1 subfamily.</text>
</comment>
<accession>A1AC27</accession>
<name>SYD_ECOK1</name>
<organism>
    <name type="scientific">Escherichia coli O1:K1 / APEC</name>
    <dbReference type="NCBI Taxonomy" id="405955"/>
    <lineage>
        <taxon>Bacteria</taxon>
        <taxon>Pseudomonadati</taxon>
        <taxon>Pseudomonadota</taxon>
        <taxon>Gammaproteobacteria</taxon>
        <taxon>Enterobacterales</taxon>
        <taxon>Enterobacteriaceae</taxon>
        <taxon>Escherichia</taxon>
    </lineage>
</organism>
<gene>
    <name evidence="1" type="primary">aspS</name>
    <name type="ordered locus">Ecok1_17230</name>
    <name type="ORF">APECO1_916</name>
</gene>